<reference key="1">
    <citation type="submission" date="2005-08" db="EMBL/GenBank/DDBJ databases">
        <title>Complete sequence of Chlorobium chlorochromatii CaD3.</title>
        <authorList>
            <consortium name="US DOE Joint Genome Institute"/>
            <person name="Copeland A."/>
            <person name="Lucas S."/>
            <person name="Lapidus A."/>
            <person name="Barry K."/>
            <person name="Detter J.C."/>
            <person name="Glavina T."/>
            <person name="Hammon N."/>
            <person name="Israni S."/>
            <person name="Pitluck S."/>
            <person name="Bryant D."/>
            <person name="Schmutz J."/>
            <person name="Larimer F."/>
            <person name="Land M."/>
            <person name="Kyrpides N."/>
            <person name="Ivanova N."/>
            <person name="Richardson P."/>
        </authorList>
    </citation>
    <scope>NUCLEOTIDE SEQUENCE [LARGE SCALE GENOMIC DNA]</scope>
    <source>
        <strain>CaD3</strain>
    </source>
</reference>
<dbReference type="EC" id="2.1.1.228" evidence="1"/>
<dbReference type="EMBL" id="CP000108">
    <property type="protein sequence ID" value="ABB28068.1"/>
    <property type="molecule type" value="Genomic_DNA"/>
</dbReference>
<dbReference type="SMR" id="Q3ASF7"/>
<dbReference type="STRING" id="340177.Cag_0802"/>
<dbReference type="KEGG" id="cch:Cag_0802"/>
<dbReference type="eggNOG" id="COG0336">
    <property type="taxonomic scope" value="Bacteria"/>
</dbReference>
<dbReference type="HOGENOM" id="CLU_047363_0_1_10"/>
<dbReference type="OrthoDB" id="9807416at2"/>
<dbReference type="GO" id="GO:0005829">
    <property type="term" value="C:cytosol"/>
    <property type="evidence" value="ECO:0007669"/>
    <property type="project" value="TreeGrafter"/>
</dbReference>
<dbReference type="GO" id="GO:0052906">
    <property type="term" value="F:tRNA (guanine(37)-N1)-methyltransferase activity"/>
    <property type="evidence" value="ECO:0007669"/>
    <property type="project" value="UniProtKB-UniRule"/>
</dbReference>
<dbReference type="GO" id="GO:0002939">
    <property type="term" value="P:tRNA N1-guanine methylation"/>
    <property type="evidence" value="ECO:0007669"/>
    <property type="project" value="TreeGrafter"/>
</dbReference>
<dbReference type="CDD" id="cd18080">
    <property type="entry name" value="TrmD-like"/>
    <property type="match status" value="1"/>
</dbReference>
<dbReference type="FunFam" id="3.40.1280.10:FF:000001">
    <property type="entry name" value="tRNA (guanine-N(1)-)-methyltransferase"/>
    <property type="match status" value="1"/>
</dbReference>
<dbReference type="Gene3D" id="3.40.1280.10">
    <property type="match status" value="1"/>
</dbReference>
<dbReference type="Gene3D" id="1.10.1270.20">
    <property type="entry name" value="tRNA(m1g37)methyltransferase, domain 2"/>
    <property type="match status" value="1"/>
</dbReference>
<dbReference type="HAMAP" id="MF_00605">
    <property type="entry name" value="TrmD"/>
    <property type="match status" value="1"/>
</dbReference>
<dbReference type="InterPro" id="IPR029028">
    <property type="entry name" value="Alpha/beta_knot_MTases"/>
</dbReference>
<dbReference type="InterPro" id="IPR023148">
    <property type="entry name" value="tRNA_m1G_MeTrfase_C_sf"/>
</dbReference>
<dbReference type="InterPro" id="IPR002649">
    <property type="entry name" value="tRNA_m1G_MeTrfase_TrmD"/>
</dbReference>
<dbReference type="InterPro" id="IPR029026">
    <property type="entry name" value="tRNA_m1G_MTases_N"/>
</dbReference>
<dbReference type="InterPro" id="IPR016009">
    <property type="entry name" value="tRNA_MeTrfase_TRMD/TRM10"/>
</dbReference>
<dbReference type="NCBIfam" id="NF000648">
    <property type="entry name" value="PRK00026.1"/>
    <property type="match status" value="1"/>
</dbReference>
<dbReference type="NCBIfam" id="TIGR00088">
    <property type="entry name" value="trmD"/>
    <property type="match status" value="1"/>
</dbReference>
<dbReference type="PANTHER" id="PTHR46417">
    <property type="entry name" value="TRNA (GUANINE-N(1)-)-METHYLTRANSFERASE"/>
    <property type="match status" value="1"/>
</dbReference>
<dbReference type="PANTHER" id="PTHR46417:SF1">
    <property type="entry name" value="TRNA (GUANINE-N(1)-)-METHYLTRANSFERASE"/>
    <property type="match status" value="1"/>
</dbReference>
<dbReference type="Pfam" id="PF01746">
    <property type="entry name" value="tRNA_m1G_MT"/>
    <property type="match status" value="1"/>
</dbReference>
<dbReference type="PIRSF" id="PIRSF000386">
    <property type="entry name" value="tRNA_mtase"/>
    <property type="match status" value="1"/>
</dbReference>
<dbReference type="SUPFAM" id="SSF75217">
    <property type="entry name" value="alpha/beta knot"/>
    <property type="match status" value="1"/>
</dbReference>
<feature type="chain" id="PRO_0000257403" description="tRNA (guanine-N(1)-)-methyltransferase">
    <location>
        <begin position="1"/>
        <end position="231"/>
    </location>
</feature>
<feature type="binding site" evidence="1">
    <location>
        <position position="112"/>
    </location>
    <ligand>
        <name>S-adenosyl-L-methionine</name>
        <dbReference type="ChEBI" id="CHEBI:59789"/>
    </ligand>
</feature>
<keyword id="KW-0963">Cytoplasm</keyword>
<keyword id="KW-0489">Methyltransferase</keyword>
<keyword id="KW-0949">S-adenosyl-L-methionine</keyword>
<keyword id="KW-0808">Transferase</keyword>
<keyword id="KW-0819">tRNA processing</keyword>
<gene>
    <name evidence="1" type="primary">trmD</name>
    <name type="ordered locus">Cag_0802</name>
</gene>
<organism>
    <name type="scientific">Chlorobium chlorochromatii (strain CaD3)</name>
    <dbReference type="NCBI Taxonomy" id="340177"/>
    <lineage>
        <taxon>Bacteria</taxon>
        <taxon>Pseudomonadati</taxon>
        <taxon>Chlorobiota</taxon>
        <taxon>Chlorobiia</taxon>
        <taxon>Chlorobiales</taxon>
        <taxon>Chlorobiaceae</taxon>
        <taxon>Chlorobium/Pelodictyon group</taxon>
        <taxon>Chlorobium</taxon>
    </lineage>
</organism>
<comment type="function">
    <text evidence="1">Specifically methylates guanosine-37 in various tRNAs.</text>
</comment>
<comment type="catalytic activity">
    <reaction evidence="1">
        <text>guanosine(37) in tRNA + S-adenosyl-L-methionine = N(1)-methylguanosine(37) in tRNA + S-adenosyl-L-homocysteine + H(+)</text>
        <dbReference type="Rhea" id="RHEA:36899"/>
        <dbReference type="Rhea" id="RHEA-COMP:10145"/>
        <dbReference type="Rhea" id="RHEA-COMP:10147"/>
        <dbReference type="ChEBI" id="CHEBI:15378"/>
        <dbReference type="ChEBI" id="CHEBI:57856"/>
        <dbReference type="ChEBI" id="CHEBI:59789"/>
        <dbReference type="ChEBI" id="CHEBI:73542"/>
        <dbReference type="ChEBI" id="CHEBI:74269"/>
        <dbReference type="EC" id="2.1.1.228"/>
    </reaction>
</comment>
<comment type="subunit">
    <text evidence="1">Homodimer.</text>
</comment>
<comment type="subcellular location">
    <subcellularLocation>
        <location evidence="1">Cytoplasm</location>
    </subcellularLocation>
</comment>
<comment type="similarity">
    <text evidence="1">Belongs to the RNA methyltransferase TrmD family.</text>
</comment>
<protein>
    <recommendedName>
        <fullName evidence="1">tRNA (guanine-N(1)-)-methyltransferase</fullName>
        <ecNumber evidence="1">2.1.1.228</ecNumber>
    </recommendedName>
    <alternativeName>
        <fullName evidence="1">M1G-methyltransferase</fullName>
    </alternativeName>
    <alternativeName>
        <fullName evidence="1">tRNA [GM37] methyltransferase</fullName>
    </alternativeName>
</protein>
<evidence type="ECO:0000255" key="1">
    <source>
        <dbReference type="HAMAP-Rule" id="MF_00605"/>
    </source>
</evidence>
<proteinExistence type="inferred from homology"/>
<name>TRMD_CHLCH</name>
<sequence length="231" mass="25997">MRFDVISVIPYFFDSVLTSGLLNIARKKGEVEIYIHNLHDYGLGRYKQVDDAPYGGGAGMVIRPEPVFACIEALQAERHYDAVIFLTPDGELLEQPLANRLSRLENLLLLCGHYKAIDERIREQLITMEISVGDVVLSGGEIPALMLMDAIVRLIPGVLGDSESALTDSFQNGLLDAAYYTRPADFRGMKVPEVLLSGHQAHIEQWRTASALERTKIRRPDLLERAWREEF</sequence>
<accession>Q3ASF7</accession>